<comment type="function">
    <text evidence="1">Catalyzes the oxidation of either pyridoxine 5'-phosphate (PNP) or pyridoxamine 5'-phosphate (PMP) into pyridoxal 5'-phosphate (PLP).</text>
</comment>
<comment type="catalytic activity">
    <reaction evidence="1">
        <text>pyridoxamine 5'-phosphate + O2 + H2O = pyridoxal 5'-phosphate + H2O2 + NH4(+)</text>
        <dbReference type="Rhea" id="RHEA:15817"/>
        <dbReference type="ChEBI" id="CHEBI:15377"/>
        <dbReference type="ChEBI" id="CHEBI:15379"/>
        <dbReference type="ChEBI" id="CHEBI:16240"/>
        <dbReference type="ChEBI" id="CHEBI:28938"/>
        <dbReference type="ChEBI" id="CHEBI:58451"/>
        <dbReference type="ChEBI" id="CHEBI:597326"/>
        <dbReference type="EC" id="1.4.3.5"/>
    </reaction>
</comment>
<comment type="catalytic activity">
    <reaction evidence="1">
        <text>pyridoxine 5'-phosphate + O2 = pyridoxal 5'-phosphate + H2O2</text>
        <dbReference type="Rhea" id="RHEA:15149"/>
        <dbReference type="ChEBI" id="CHEBI:15379"/>
        <dbReference type="ChEBI" id="CHEBI:16240"/>
        <dbReference type="ChEBI" id="CHEBI:58589"/>
        <dbReference type="ChEBI" id="CHEBI:597326"/>
        <dbReference type="EC" id="1.4.3.5"/>
    </reaction>
</comment>
<comment type="cofactor">
    <cofactor evidence="1">
        <name>FMN</name>
        <dbReference type="ChEBI" id="CHEBI:58210"/>
    </cofactor>
    <text evidence="1">Binds 1 FMN per subunit.</text>
</comment>
<comment type="pathway">
    <text evidence="1">Cofactor metabolism; pyridoxal 5'-phosphate salvage; pyridoxal 5'-phosphate from pyridoxamine 5'-phosphate: step 1/1.</text>
</comment>
<comment type="pathway">
    <text evidence="1">Cofactor metabolism; pyridoxal 5'-phosphate salvage; pyridoxal 5'-phosphate from pyridoxine 5'-phosphate: step 1/1.</text>
</comment>
<comment type="subunit">
    <text evidence="1">Homodimer.</text>
</comment>
<comment type="similarity">
    <text evidence="1">Belongs to the pyridoxamine 5'-phosphate oxidase family.</text>
</comment>
<proteinExistence type="inferred from homology"/>
<sequence>MSDRGGIFAGDDPFAIARSWLAEAERTEPNDANAMALATVDADGLPDARMVLLKDIEGGAADGSFVFYTNYESAKGVEIEATGVAAFVMHWKSLRRQIRVRGHVTRVEPELADAYYASRPLQSRIGAWASRQSRPLASRGALMAEVARLGISLGLNPSRPPHWGGYRIHPVQIEFWADGAFRLHDRFRWTKSSYQGENSALRDEGQEVPQSLWQVCRLSP</sequence>
<feature type="chain" id="PRO_0000292312" description="Pyridoxine/pyridoxamine 5'-phosphate oxidase">
    <location>
        <begin position="1"/>
        <end position="220"/>
    </location>
</feature>
<feature type="binding site" evidence="1">
    <location>
        <begin position="49"/>
        <end position="54"/>
    </location>
    <ligand>
        <name>FMN</name>
        <dbReference type="ChEBI" id="CHEBI:58210"/>
    </ligand>
</feature>
<feature type="binding site" evidence="1">
    <location>
        <position position="54"/>
    </location>
    <ligand>
        <name>substrate</name>
    </ligand>
</feature>
<feature type="binding site" evidence="1">
    <location>
        <begin position="68"/>
        <end position="69"/>
    </location>
    <ligand>
        <name>FMN</name>
        <dbReference type="ChEBI" id="CHEBI:58210"/>
    </ligand>
</feature>
<feature type="binding site" evidence="1">
    <location>
        <position position="75"/>
    </location>
    <ligand>
        <name>FMN</name>
        <dbReference type="ChEBI" id="CHEBI:58210"/>
    </ligand>
</feature>
<feature type="binding site" evidence="1">
    <location>
        <position position="97"/>
    </location>
    <ligand>
        <name>FMN</name>
        <dbReference type="ChEBI" id="CHEBI:58210"/>
    </ligand>
</feature>
<feature type="binding site" evidence="1">
    <location>
        <position position="115"/>
    </location>
    <ligand>
        <name>substrate</name>
    </ligand>
</feature>
<feature type="binding site" evidence="1">
    <location>
        <position position="119"/>
    </location>
    <ligand>
        <name>substrate</name>
    </ligand>
</feature>
<feature type="binding site" evidence="1">
    <location>
        <position position="123"/>
    </location>
    <ligand>
        <name>substrate</name>
    </ligand>
</feature>
<feature type="binding site" evidence="1">
    <location>
        <begin position="132"/>
        <end position="133"/>
    </location>
    <ligand>
        <name>FMN</name>
        <dbReference type="ChEBI" id="CHEBI:58210"/>
    </ligand>
</feature>
<feature type="binding site" evidence="1">
    <location>
        <position position="176"/>
    </location>
    <ligand>
        <name>FMN</name>
        <dbReference type="ChEBI" id="CHEBI:58210"/>
    </ligand>
</feature>
<feature type="binding site" evidence="1">
    <location>
        <begin position="182"/>
        <end position="184"/>
    </location>
    <ligand>
        <name>substrate</name>
    </ligand>
</feature>
<feature type="binding site" evidence="1">
    <location>
        <position position="186"/>
    </location>
    <ligand>
        <name>FMN</name>
        <dbReference type="ChEBI" id="CHEBI:58210"/>
    </ligand>
</feature>
<gene>
    <name evidence="1" type="primary">pdxH</name>
    <name type="ordered locus">Pden_0858</name>
</gene>
<organism>
    <name type="scientific">Paracoccus denitrificans (strain Pd 1222)</name>
    <dbReference type="NCBI Taxonomy" id="318586"/>
    <lineage>
        <taxon>Bacteria</taxon>
        <taxon>Pseudomonadati</taxon>
        <taxon>Pseudomonadota</taxon>
        <taxon>Alphaproteobacteria</taxon>
        <taxon>Rhodobacterales</taxon>
        <taxon>Paracoccaceae</taxon>
        <taxon>Paracoccus</taxon>
    </lineage>
</organism>
<name>PDXH_PARDP</name>
<protein>
    <recommendedName>
        <fullName evidence="1">Pyridoxine/pyridoxamine 5'-phosphate oxidase</fullName>
        <ecNumber evidence="1">1.4.3.5</ecNumber>
    </recommendedName>
    <alternativeName>
        <fullName evidence="1">PNP/PMP oxidase</fullName>
        <shortName evidence="1">PNPOx</shortName>
    </alternativeName>
    <alternativeName>
        <fullName evidence="1">Pyridoxal 5'-phosphate synthase</fullName>
    </alternativeName>
</protein>
<evidence type="ECO:0000255" key="1">
    <source>
        <dbReference type="HAMAP-Rule" id="MF_01629"/>
    </source>
</evidence>
<accession>A1B0C6</accession>
<keyword id="KW-0285">Flavoprotein</keyword>
<keyword id="KW-0288">FMN</keyword>
<keyword id="KW-0560">Oxidoreductase</keyword>
<keyword id="KW-0664">Pyridoxine biosynthesis</keyword>
<keyword id="KW-1185">Reference proteome</keyword>
<dbReference type="EC" id="1.4.3.5" evidence="1"/>
<dbReference type="EMBL" id="CP000489">
    <property type="protein sequence ID" value="ABL68970.1"/>
    <property type="molecule type" value="Genomic_DNA"/>
</dbReference>
<dbReference type="RefSeq" id="WP_011747198.1">
    <property type="nucleotide sequence ID" value="NC_008686.1"/>
</dbReference>
<dbReference type="SMR" id="A1B0C6"/>
<dbReference type="STRING" id="318586.Pden_0858"/>
<dbReference type="EnsemblBacteria" id="ABL68970">
    <property type="protein sequence ID" value="ABL68970"/>
    <property type="gene ID" value="Pden_0858"/>
</dbReference>
<dbReference type="GeneID" id="93452081"/>
<dbReference type="KEGG" id="pde:Pden_0858"/>
<dbReference type="eggNOG" id="COG0259">
    <property type="taxonomic scope" value="Bacteria"/>
</dbReference>
<dbReference type="HOGENOM" id="CLU_032263_2_3_5"/>
<dbReference type="OrthoDB" id="9780392at2"/>
<dbReference type="UniPathway" id="UPA01068">
    <property type="reaction ID" value="UER00304"/>
</dbReference>
<dbReference type="UniPathway" id="UPA01068">
    <property type="reaction ID" value="UER00305"/>
</dbReference>
<dbReference type="Proteomes" id="UP000000361">
    <property type="component" value="Chromosome 1"/>
</dbReference>
<dbReference type="GO" id="GO:0010181">
    <property type="term" value="F:FMN binding"/>
    <property type="evidence" value="ECO:0007669"/>
    <property type="project" value="UniProtKB-UniRule"/>
</dbReference>
<dbReference type="GO" id="GO:0004733">
    <property type="term" value="F:pyridoxamine phosphate oxidase activity"/>
    <property type="evidence" value="ECO:0007669"/>
    <property type="project" value="UniProtKB-UniRule"/>
</dbReference>
<dbReference type="GO" id="GO:0008615">
    <property type="term" value="P:pyridoxine biosynthetic process"/>
    <property type="evidence" value="ECO:0007669"/>
    <property type="project" value="UniProtKB-KW"/>
</dbReference>
<dbReference type="Gene3D" id="2.30.110.10">
    <property type="entry name" value="Electron Transport, Fmn-binding Protein, Chain A"/>
    <property type="match status" value="1"/>
</dbReference>
<dbReference type="HAMAP" id="MF_01629">
    <property type="entry name" value="PdxH"/>
    <property type="match status" value="1"/>
</dbReference>
<dbReference type="InterPro" id="IPR000659">
    <property type="entry name" value="Pyridox_Oxase"/>
</dbReference>
<dbReference type="InterPro" id="IPR019740">
    <property type="entry name" value="Pyridox_Oxase_CS"/>
</dbReference>
<dbReference type="InterPro" id="IPR011576">
    <property type="entry name" value="Pyridox_Oxase_N"/>
</dbReference>
<dbReference type="InterPro" id="IPR019576">
    <property type="entry name" value="Pyridoxamine_oxidase_dimer_C"/>
</dbReference>
<dbReference type="InterPro" id="IPR012349">
    <property type="entry name" value="Split_barrel_FMN-bd"/>
</dbReference>
<dbReference type="NCBIfam" id="TIGR00558">
    <property type="entry name" value="pdxH"/>
    <property type="match status" value="1"/>
</dbReference>
<dbReference type="NCBIfam" id="NF004231">
    <property type="entry name" value="PRK05679.1"/>
    <property type="match status" value="1"/>
</dbReference>
<dbReference type="PANTHER" id="PTHR10851:SF0">
    <property type="entry name" value="PYRIDOXINE-5'-PHOSPHATE OXIDASE"/>
    <property type="match status" value="1"/>
</dbReference>
<dbReference type="PANTHER" id="PTHR10851">
    <property type="entry name" value="PYRIDOXINE-5-PHOSPHATE OXIDASE"/>
    <property type="match status" value="1"/>
</dbReference>
<dbReference type="Pfam" id="PF10590">
    <property type="entry name" value="PNP_phzG_C"/>
    <property type="match status" value="1"/>
</dbReference>
<dbReference type="Pfam" id="PF01243">
    <property type="entry name" value="PNPOx_N"/>
    <property type="match status" value="1"/>
</dbReference>
<dbReference type="PIRSF" id="PIRSF000190">
    <property type="entry name" value="Pyd_amn-ph_oxd"/>
    <property type="match status" value="1"/>
</dbReference>
<dbReference type="SUPFAM" id="SSF50475">
    <property type="entry name" value="FMN-binding split barrel"/>
    <property type="match status" value="1"/>
</dbReference>
<dbReference type="PROSITE" id="PS01064">
    <property type="entry name" value="PYRIDOX_OXIDASE"/>
    <property type="match status" value="1"/>
</dbReference>
<reference key="1">
    <citation type="submission" date="2006-12" db="EMBL/GenBank/DDBJ databases">
        <title>Complete sequence of chromosome 1 of Paracoccus denitrificans PD1222.</title>
        <authorList>
            <person name="Copeland A."/>
            <person name="Lucas S."/>
            <person name="Lapidus A."/>
            <person name="Barry K."/>
            <person name="Detter J.C."/>
            <person name="Glavina del Rio T."/>
            <person name="Hammon N."/>
            <person name="Israni S."/>
            <person name="Dalin E."/>
            <person name="Tice H."/>
            <person name="Pitluck S."/>
            <person name="Munk A.C."/>
            <person name="Brettin T."/>
            <person name="Bruce D."/>
            <person name="Han C."/>
            <person name="Tapia R."/>
            <person name="Gilna P."/>
            <person name="Schmutz J."/>
            <person name="Larimer F."/>
            <person name="Land M."/>
            <person name="Hauser L."/>
            <person name="Kyrpides N."/>
            <person name="Lykidis A."/>
            <person name="Spiro S."/>
            <person name="Richardson D.J."/>
            <person name="Moir J.W.B."/>
            <person name="Ferguson S.J."/>
            <person name="van Spanning R.J.M."/>
            <person name="Richardson P."/>
        </authorList>
    </citation>
    <scope>NUCLEOTIDE SEQUENCE [LARGE SCALE GENOMIC DNA]</scope>
    <source>
        <strain>Pd 1222</strain>
    </source>
</reference>